<organism>
    <name type="scientific">Actinobacillus pleuropneumoniae serotype 5b (strain L20)</name>
    <dbReference type="NCBI Taxonomy" id="416269"/>
    <lineage>
        <taxon>Bacteria</taxon>
        <taxon>Pseudomonadati</taxon>
        <taxon>Pseudomonadota</taxon>
        <taxon>Gammaproteobacteria</taxon>
        <taxon>Pasteurellales</taxon>
        <taxon>Pasteurellaceae</taxon>
        <taxon>Actinobacillus</taxon>
    </lineage>
</organism>
<reference key="1">
    <citation type="journal article" date="2008" name="J. Bacteriol.">
        <title>The complete genome sequence of Actinobacillus pleuropneumoniae L20 (serotype 5b).</title>
        <authorList>
            <person name="Foote S.J."/>
            <person name="Bosse J.T."/>
            <person name="Bouevitch A.B."/>
            <person name="Langford P.R."/>
            <person name="Young N.M."/>
            <person name="Nash J.H.E."/>
        </authorList>
    </citation>
    <scope>NUCLEOTIDE SEQUENCE [LARGE SCALE GENOMIC DNA]</scope>
    <source>
        <strain>L20</strain>
    </source>
</reference>
<dbReference type="EC" id="6.3.2.13" evidence="1"/>
<dbReference type="EMBL" id="CP000569">
    <property type="protein sequence ID" value="ABN73121.1"/>
    <property type="molecule type" value="Genomic_DNA"/>
</dbReference>
<dbReference type="RefSeq" id="WP_009874741.1">
    <property type="nucleotide sequence ID" value="NC_009053.1"/>
</dbReference>
<dbReference type="SMR" id="A3MY85"/>
<dbReference type="STRING" id="416269.APL_0013"/>
<dbReference type="EnsemblBacteria" id="ABN73121">
    <property type="protein sequence ID" value="ABN73121"/>
    <property type="gene ID" value="APL_0013"/>
</dbReference>
<dbReference type="KEGG" id="apl:APL_0013"/>
<dbReference type="eggNOG" id="COG0769">
    <property type="taxonomic scope" value="Bacteria"/>
</dbReference>
<dbReference type="HOGENOM" id="CLU_022291_3_2_6"/>
<dbReference type="UniPathway" id="UPA00219"/>
<dbReference type="Proteomes" id="UP000001432">
    <property type="component" value="Chromosome"/>
</dbReference>
<dbReference type="GO" id="GO:0005737">
    <property type="term" value="C:cytoplasm"/>
    <property type="evidence" value="ECO:0007669"/>
    <property type="project" value="UniProtKB-SubCell"/>
</dbReference>
<dbReference type="GO" id="GO:0005524">
    <property type="term" value="F:ATP binding"/>
    <property type="evidence" value="ECO:0007669"/>
    <property type="project" value="UniProtKB-UniRule"/>
</dbReference>
<dbReference type="GO" id="GO:0000287">
    <property type="term" value="F:magnesium ion binding"/>
    <property type="evidence" value="ECO:0007669"/>
    <property type="project" value="UniProtKB-UniRule"/>
</dbReference>
<dbReference type="GO" id="GO:0008765">
    <property type="term" value="F:UDP-N-acetylmuramoylalanyl-D-glutamate-2,6-diaminopimelate ligase activity"/>
    <property type="evidence" value="ECO:0007669"/>
    <property type="project" value="UniProtKB-UniRule"/>
</dbReference>
<dbReference type="GO" id="GO:0051301">
    <property type="term" value="P:cell division"/>
    <property type="evidence" value="ECO:0007669"/>
    <property type="project" value="UniProtKB-KW"/>
</dbReference>
<dbReference type="GO" id="GO:0071555">
    <property type="term" value="P:cell wall organization"/>
    <property type="evidence" value="ECO:0007669"/>
    <property type="project" value="UniProtKB-KW"/>
</dbReference>
<dbReference type="GO" id="GO:0009252">
    <property type="term" value="P:peptidoglycan biosynthetic process"/>
    <property type="evidence" value="ECO:0007669"/>
    <property type="project" value="UniProtKB-UniRule"/>
</dbReference>
<dbReference type="GO" id="GO:0008360">
    <property type="term" value="P:regulation of cell shape"/>
    <property type="evidence" value="ECO:0007669"/>
    <property type="project" value="UniProtKB-KW"/>
</dbReference>
<dbReference type="FunFam" id="3.90.190.20:FF:000006">
    <property type="entry name" value="UDP-N-acetylmuramoyl-L-alanyl-D-glutamate--2,6-diaminopimelate ligase"/>
    <property type="match status" value="1"/>
</dbReference>
<dbReference type="Gene3D" id="3.90.190.20">
    <property type="entry name" value="Mur ligase, C-terminal domain"/>
    <property type="match status" value="1"/>
</dbReference>
<dbReference type="Gene3D" id="3.40.1190.10">
    <property type="entry name" value="Mur-like, catalytic domain"/>
    <property type="match status" value="1"/>
</dbReference>
<dbReference type="Gene3D" id="3.40.1390.10">
    <property type="entry name" value="MurE/MurF, N-terminal domain"/>
    <property type="match status" value="1"/>
</dbReference>
<dbReference type="HAMAP" id="MF_00208">
    <property type="entry name" value="MurE"/>
    <property type="match status" value="1"/>
</dbReference>
<dbReference type="InterPro" id="IPR036565">
    <property type="entry name" value="Mur-like_cat_sf"/>
</dbReference>
<dbReference type="InterPro" id="IPR004101">
    <property type="entry name" value="Mur_ligase_C"/>
</dbReference>
<dbReference type="InterPro" id="IPR036615">
    <property type="entry name" value="Mur_ligase_C_dom_sf"/>
</dbReference>
<dbReference type="InterPro" id="IPR013221">
    <property type="entry name" value="Mur_ligase_cen"/>
</dbReference>
<dbReference type="InterPro" id="IPR000713">
    <property type="entry name" value="Mur_ligase_N"/>
</dbReference>
<dbReference type="InterPro" id="IPR035911">
    <property type="entry name" value="MurE/MurF_N"/>
</dbReference>
<dbReference type="InterPro" id="IPR005761">
    <property type="entry name" value="UDP-N-AcMur-Glu-dNH2Pim_ligase"/>
</dbReference>
<dbReference type="NCBIfam" id="TIGR01085">
    <property type="entry name" value="murE"/>
    <property type="match status" value="1"/>
</dbReference>
<dbReference type="NCBIfam" id="NF001123">
    <property type="entry name" value="PRK00139.1-1"/>
    <property type="match status" value="1"/>
</dbReference>
<dbReference type="NCBIfam" id="NF001124">
    <property type="entry name" value="PRK00139.1-2"/>
    <property type="match status" value="1"/>
</dbReference>
<dbReference type="NCBIfam" id="NF001126">
    <property type="entry name" value="PRK00139.1-4"/>
    <property type="match status" value="1"/>
</dbReference>
<dbReference type="PANTHER" id="PTHR23135">
    <property type="entry name" value="MUR LIGASE FAMILY MEMBER"/>
    <property type="match status" value="1"/>
</dbReference>
<dbReference type="PANTHER" id="PTHR23135:SF4">
    <property type="entry name" value="UDP-N-ACETYLMURAMOYL-L-ALANYL-D-GLUTAMATE--2,6-DIAMINOPIMELATE LIGASE MURE HOMOLOG, CHLOROPLASTIC"/>
    <property type="match status" value="1"/>
</dbReference>
<dbReference type="Pfam" id="PF01225">
    <property type="entry name" value="Mur_ligase"/>
    <property type="match status" value="1"/>
</dbReference>
<dbReference type="Pfam" id="PF02875">
    <property type="entry name" value="Mur_ligase_C"/>
    <property type="match status" value="1"/>
</dbReference>
<dbReference type="Pfam" id="PF08245">
    <property type="entry name" value="Mur_ligase_M"/>
    <property type="match status" value="1"/>
</dbReference>
<dbReference type="SUPFAM" id="SSF53623">
    <property type="entry name" value="MurD-like peptide ligases, catalytic domain"/>
    <property type="match status" value="1"/>
</dbReference>
<dbReference type="SUPFAM" id="SSF53244">
    <property type="entry name" value="MurD-like peptide ligases, peptide-binding domain"/>
    <property type="match status" value="1"/>
</dbReference>
<dbReference type="SUPFAM" id="SSF63418">
    <property type="entry name" value="MurE/MurF N-terminal domain"/>
    <property type="match status" value="1"/>
</dbReference>
<gene>
    <name evidence="1" type="primary">murE</name>
    <name type="ordered locus">APL_0013</name>
</gene>
<keyword id="KW-0067">ATP-binding</keyword>
<keyword id="KW-0131">Cell cycle</keyword>
<keyword id="KW-0132">Cell division</keyword>
<keyword id="KW-0133">Cell shape</keyword>
<keyword id="KW-0961">Cell wall biogenesis/degradation</keyword>
<keyword id="KW-0963">Cytoplasm</keyword>
<keyword id="KW-0436">Ligase</keyword>
<keyword id="KW-0460">Magnesium</keyword>
<keyword id="KW-0547">Nucleotide-binding</keyword>
<keyword id="KW-0573">Peptidoglycan synthesis</keyword>
<keyword id="KW-1185">Reference proteome</keyword>
<comment type="function">
    <text evidence="1">Catalyzes the addition of meso-diaminopimelic acid to the nucleotide precursor UDP-N-acetylmuramoyl-L-alanyl-D-glutamate (UMAG) in the biosynthesis of bacterial cell-wall peptidoglycan.</text>
</comment>
<comment type="catalytic activity">
    <reaction evidence="1">
        <text>UDP-N-acetyl-alpha-D-muramoyl-L-alanyl-D-glutamate + meso-2,6-diaminopimelate + ATP = UDP-N-acetyl-alpha-D-muramoyl-L-alanyl-gamma-D-glutamyl-meso-2,6-diaminopimelate + ADP + phosphate + H(+)</text>
        <dbReference type="Rhea" id="RHEA:23676"/>
        <dbReference type="ChEBI" id="CHEBI:15378"/>
        <dbReference type="ChEBI" id="CHEBI:30616"/>
        <dbReference type="ChEBI" id="CHEBI:43474"/>
        <dbReference type="ChEBI" id="CHEBI:57791"/>
        <dbReference type="ChEBI" id="CHEBI:83900"/>
        <dbReference type="ChEBI" id="CHEBI:83905"/>
        <dbReference type="ChEBI" id="CHEBI:456216"/>
        <dbReference type="EC" id="6.3.2.13"/>
    </reaction>
</comment>
<comment type="cofactor">
    <cofactor evidence="1">
        <name>Mg(2+)</name>
        <dbReference type="ChEBI" id="CHEBI:18420"/>
    </cofactor>
</comment>
<comment type="pathway">
    <text evidence="1">Cell wall biogenesis; peptidoglycan biosynthesis.</text>
</comment>
<comment type="subcellular location">
    <subcellularLocation>
        <location evidence="1">Cytoplasm</location>
    </subcellularLocation>
</comment>
<comment type="PTM">
    <text evidence="1">Carboxylation is probably crucial for Mg(2+) binding and, consequently, for the gamma-phosphate positioning of ATP.</text>
</comment>
<comment type="similarity">
    <text evidence="1">Belongs to the MurCDEF family. MurE subfamily.</text>
</comment>
<name>MURE_ACTP2</name>
<accession>A3MY85</accession>
<evidence type="ECO:0000255" key="1">
    <source>
        <dbReference type="HAMAP-Rule" id="MF_00208"/>
    </source>
</evidence>
<protein>
    <recommendedName>
        <fullName evidence="1">UDP-N-acetylmuramoyl-L-alanyl-D-glutamate--2,6-diaminopimelate ligase</fullName>
        <ecNumber evidence="1">6.3.2.13</ecNumber>
    </recommendedName>
    <alternativeName>
        <fullName evidence="1">Meso-A2pm-adding enzyme</fullName>
    </alternativeName>
    <alternativeName>
        <fullName evidence="1">Meso-diaminopimelate-adding enzyme</fullName>
    </alternativeName>
    <alternativeName>
        <fullName evidence="1">UDP-MurNAc-L-Ala-D-Glu:meso-diaminopimelate ligase</fullName>
    </alternativeName>
    <alternativeName>
        <fullName evidence="1">UDP-MurNAc-tripeptide synthetase</fullName>
    </alternativeName>
    <alternativeName>
        <fullName evidence="1">UDP-N-acetylmuramyl-tripeptide synthetase</fullName>
    </alternativeName>
</protein>
<proteinExistence type="inferred from homology"/>
<sequence>MKRLLPFLTELDAWVTELKPLKQMTLDSRQVDEGDLFVALKGHQVDGRRFIQKAIEQGAALVLAEADEGQDEIELDAKFAKYNLDRTACKVVLVPNLARILSEIAGAFYANPSEKLTLVGVTGTNGKTTSAQLLAQWHNLLGGKSAVMGTIGNGLYGKVQEAANTTGSAIEVQRNLADFVEMGADFCAMEVSSHGLAQYRAEALSYDLAVFTNLSRDHLDYHKTMEEYAQAKFRLFSELDTKAQVLNADDEVGREWLAKLPDAVAVSTDASFSSEHKFVKATDVSFSLQGVKIAFESSWGNGELNSRLIGAFNVNNLLTALAGLLVLGHDLPKLIETAPLLQGVAGRMECVVSQKNPQNRPLVLVDYAHTPDALEKALQAARLHTEGELYCIFGCGGDRDAGKRPMMAAIAEELADKVIATDDNPRTEDNAKIMADILNGFVQVEKVQVIHDREQAIKTAIEQANEKDVILIAGKGHEDYQIIGTTKHHFSDQETAAKYL</sequence>
<feature type="chain" id="PRO_1000012333" description="UDP-N-acetylmuramoyl-L-alanyl-D-glutamate--2,6-diaminopimelate ligase">
    <location>
        <begin position="1"/>
        <end position="500"/>
    </location>
</feature>
<feature type="short sequence motif" description="Meso-diaminopimelate recognition motif">
    <location>
        <begin position="423"/>
        <end position="426"/>
    </location>
</feature>
<feature type="binding site" evidence="1">
    <location>
        <position position="26"/>
    </location>
    <ligand>
        <name>UDP-N-acetyl-alpha-D-muramoyl-L-alanyl-D-glutamate</name>
        <dbReference type="ChEBI" id="CHEBI:83900"/>
    </ligand>
</feature>
<feature type="binding site" evidence="1">
    <location>
        <position position="28"/>
    </location>
    <ligand>
        <name>UDP-N-acetyl-alpha-D-muramoyl-L-alanyl-D-glutamate</name>
        <dbReference type="ChEBI" id="CHEBI:83900"/>
    </ligand>
</feature>
<feature type="binding site" evidence="1">
    <location>
        <begin position="43"/>
        <end position="45"/>
    </location>
    <ligand>
        <name>UDP-N-acetyl-alpha-D-muramoyl-L-alanyl-D-glutamate</name>
        <dbReference type="ChEBI" id="CHEBI:83900"/>
    </ligand>
</feature>
<feature type="binding site" evidence="1">
    <location>
        <begin position="123"/>
        <end position="129"/>
    </location>
    <ligand>
        <name>ATP</name>
        <dbReference type="ChEBI" id="CHEBI:30616"/>
    </ligand>
</feature>
<feature type="binding site" evidence="1">
    <location>
        <position position="164"/>
    </location>
    <ligand>
        <name>UDP-N-acetyl-alpha-D-muramoyl-L-alanyl-D-glutamate</name>
        <dbReference type="ChEBI" id="CHEBI:83900"/>
    </ligand>
</feature>
<feature type="binding site" evidence="1">
    <location>
        <begin position="165"/>
        <end position="166"/>
    </location>
    <ligand>
        <name>UDP-N-acetyl-alpha-D-muramoyl-L-alanyl-D-glutamate</name>
        <dbReference type="ChEBI" id="CHEBI:83900"/>
    </ligand>
</feature>
<feature type="binding site" evidence="1">
    <location>
        <position position="192"/>
    </location>
    <ligand>
        <name>UDP-N-acetyl-alpha-D-muramoyl-L-alanyl-D-glutamate</name>
        <dbReference type="ChEBI" id="CHEBI:83900"/>
    </ligand>
</feature>
<feature type="binding site" evidence="1">
    <location>
        <position position="198"/>
    </location>
    <ligand>
        <name>UDP-N-acetyl-alpha-D-muramoyl-L-alanyl-D-glutamate</name>
        <dbReference type="ChEBI" id="CHEBI:83900"/>
    </ligand>
</feature>
<feature type="binding site" evidence="1">
    <location>
        <position position="200"/>
    </location>
    <ligand>
        <name>UDP-N-acetyl-alpha-D-muramoyl-L-alanyl-D-glutamate</name>
        <dbReference type="ChEBI" id="CHEBI:83900"/>
    </ligand>
</feature>
<feature type="binding site" evidence="1">
    <location>
        <position position="399"/>
    </location>
    <ligand>
        <name>meso-2,6-diaminopimelate</name>
        <dbReference type="ChEBI" id="CHEBI:57791"/>
    </ligand>
</feature>
<feature type="binding site" evidence="1">
    <location>
        <begin position="423"/>
        <end position="426"/>
    </location>
    <ligand>
        <name>meso-2,6-diaminopimelate</name>
        <dbReference type="ChEBI" id="CHEBI:57791"/>
    </ligand>
</feature>
<feature type="binding site" evidence="1">
    <location>
        <position position="474"/>
    </location>
    <ligand>
        <name>meso-2,6-diaminopimelate</name>
        <dbReference type="ChEBI" id="CHEBI:57791"/>
    </ligand>
</feature>
<feature type="binding site" evidence="1">
    <location>
        <position position="478"/>
    </location>
    <ligand>
        <name>meso-2,6-diaminopimelate</name>
        <dbReference type="ChEBI" id="CHEBI:57791"/>
    </ligand>
</feature>
<feature type="modified residue" description="N6-carboxylysine" evidence="1">
    <location>
        <position position="232"/>
    </location>
</feature>